<sequence>ITNACFEPANQMVKCDPRHGKYMACCMLYRGDVVPKDVNAAIATIKTKRTIQFVDWCPTGFKVGINYQPPTVVPGGDLAKVQRAVCMLSNTTAIAEAWARLDHKFDLMYAKRAFVHWYVGEGMEEGEFSEAREDLAALEKDYEEVGVDSVEGEAEEEGEEY</sequence>
<protein>
    <recommendedName>
        <fullName>Tubulin alpha chain</fullName>
        <ecNumber evidence="2">3.6.5.-</ecNumber>
    </recommendedName>
</protein>
<keyword id="KW-0963">Cytoplasm</keyword>
<keyword id="KW-0206">Cytoskeleton</keyword>
<keyword id="KW-0342">GTP-binding</keyword>
<keyword id="KW-0378">Hydrolase</keyword>
<keyword id="KW-0493">Microtubule</keyword>
<keyword id="KW-0547">Nucleotide-binding</keyword>
<proteinExistence type="inferred from homology"/>
<accession>P02553</accession>
<name>TBA_LYTPI</name>
<organism>
    <name type="scientific">Lytechinus pictus</name>
    <name type="common">Painted sea urchin</name>
    <dbReference type="NCBI Taxonomy" id="7653"/>
    <lineage>
        <taxon>Eukaryota</taxon>
        <taxon>Metazoa</taxon>
        <taxon>Echinodermata</taxon>
        <taxon>Eleutherozoa</taxon>
        <taxon>Echinozoa</taxon>
        <taxon>Echinoidea</taxon>
        <taxon>Euechinoidea</taxon>
        <taxon>Echinacea</taxon>
        <taxon>Temnopleuroida</taxon>
        <taxon>Toxopneustidae</taxon>
        <taxon>Lytechinus</taxon>
    </lineage>
</organism>
<reference key="1">
    <citation type="journal article" date="1983" name="J. Mol. Evol.">
        <title>Evolution of alpha q- and beta-tubulin genes as inferred by the nucleotide sequences of sea urchin cDNA clones.</title>
        <authorList>
            <person name="Alexandraki D."/>
            <person name="Ruderman J.V."/>
        </authorList>
    </citation>
    <scope>NUCLEOTIDE SEQUENCE</scope>
</reference>
<comment type="function">
    <text>Tubulin is the major constituent of microtubules, a cylinder consisting of laterally associated linear protofilaments composed of alpha- and beta-tubulin heterodimers. Microtubules grow by the addition of GTP-tubulin dimers to the microtubule end, where a stabilizing cap forms. Below the cap, tubulin dimers are in GDP-bound state, owing to GTPase activity of alpha-tubulin.</text>
</comment>
<comment type="catalytic activity">
    <reaction evidence="2">
        <text>GTP + H2O = GDP + phosphate + H(+)</text>
        <dbReference type="Rhea" id="RHEA:19669"/>
        <dbReference type="ChEBI" id="CHEBI:15377"/>
        <dbReference type="ChEBI" id="CHEBI:15378"/>
        <dbReference type="ChEBI" id="CHEBI:37565"/>
        <dbReference type="ChEBI" id="CHEBI:43474"/>
        <dbReference type="ChEBI" id="CHEBI:58189"/>
    </reaction>
    <physiologicalReaction direction="left-to-right" evidence="2">
        <dbReference type="Rhea" id="RHEA:19670"/>
    </physiologicalReaction>
</comment>
<comment type="cofactor">
    <cofactor evidence="2">
        <name>Mg(2+)</name>
        <dbReference type="ChEBI" id="CHEBI:18420"/>
    </cofactor>
</comment>
<comment type="subunit">
    <text>Dimer of alpha and beta chains. A typical microtubule is a hollow water-filled tube with an outer diameter of 25 nm and an inner diameter of 15 nM. Alpha-beta heterodimers associate head-to-tail to form protofilaments running lengthwise along the microtubule wall with the beta-tubulin subunit facing the microtubule plus end conferring a structural polarity. Microtubules usually have 13 protofilaments but different protofilament numbers can be found in some organisms and specialized cells.</text>
</comment>
<comment type="subcellular location">
    <subcellularLocation>
        <location>Cytoplasm</location>
        <location>Cytoskeleton</location>
    </subcellularLocation>
</comment>
<comment type="PTM">
    <text evidence="1">Undergoes a tyrosination/detyrosination cycle, the cyclic removal and re-addition of a C-terminal tyrosine residue by the enzymes tubulin tyrosine carboxypeptidase (TTCP) and tubulin tyrosine ligase (TTL), respectively.</text>
</comment>
<comment type="similarity">
    <text evidence="3">Belongs to the tubulin family.</text>
</comment>
<feature type="chain" id="PRO_0000048187" description="Tubulin alpha chain">
    <location>
        <begin position="1" status="less than"/>
        <end position="161"/>
    </location>
</feature>
<feature type="site" description="Involved in polymerization">
    <location>
        <position position="161"/>
    </location>
</feature>
<feature type="non-terminal residue">
    <location>
        <position position="1"/>
    </location>
</feature>
<evidence type="ECO:0000250" key="1"/>
<evidence type="ECO:0000250" key="2">
    <source>
        <dbReference type="UniProtKB" id="P68363"/>
    </source>
</evidence>
<evidence type="ECO:0000305" key="3"/>
<dbReference type="EC" id="3.6.5.-" evidence="2"/>
<dbReference type="PIR" id="A02969">
    <property type="entry name" value="UBURAL"/>
</dbReference>
<dbReference type="SMR" id="P02553"/>
<dbReference type="OrthoDB" id="1844at2759"/>
<dbReference type="GO" id="GO:0005737">
    <property type="term" value="C:cytoplasm"/>
    <property type="evidence" value="ECO:0007669"/>
    <property type="project" value="UniProtKB-KW"/>
</dbReference>
<dbReference type="GO" id="GO:0005874">
    <property type="term" value="C:microtubule"/>
    <property type="evidence" value="ECO:0007669"/>
    <property type="project" value="UniProtKB-KW"/>
</dbReference>
<dbReference type="GO" id="GO:0005525">
    <property type="term" value="F:GTP binding"/>
    <property type="evidence" value="ECO:0007669"/>
    <property type="project" value="UniProtKB-KW"/>
</dbReference>
<dbReference type="GO" id="GO:0016787">
    <property type="term" value="F:hydrolase activity"/>
    <property type="evidence" value="ECO:0007669"/>
    <property type="project" value="UniProtKB-KW"/>
</dbReference>
<dbReference type="GO" id="GO:0005200">
    <property type="term" value="F:structural constituent of cytoskeleton"/>
    <property type="evidence" value="ECO:0007669"/>
    <property type="project" value="InterPro"/>
</dbReference>
<dbReference type="GO" id="GO:0007017">
    <property type="term" value="P:microtubule-based process"/>
    <property type="evidence" value="ECO:0007669"/>
    <property type="project" value="InterPro"/>
</dbReference>
<dbReference type="FunFam" id="1.10.287.600:FF:000005">
    <property type="entry name" value="Tubulin alpha chain"/>
    <property type="match status" value="1"/>
</dbReference>
<dbReference type="FunFam" id="3.30.1330.20:FF:000001">
    <property type="entry name" value="Tubulin alpha chain"/>
    <property type="match status" value="1"/>
</dbReference>
<dbReference type="Gene3D" id="1.10.287.600">
    <property type="entry name" value="Helix hairpin bin"/>
    <property type="match status" value="1"/>
</dbReference>
<dbReference type="Gene3D" id="3.30.1330.20">
    <property type="entry name" value="Tubulin/FtsZ, C-terminal domain"/>
    <property type="match status" value="1"/>
</dbReference>
<dbReference type="InterPro" id="IPR002452">
    <property type="entry name" value="Alpha_tubulin"/>
</dbReference>
<dbReference type="InterPro" id="IPR008280">
    <property type="entry name" value="Tub_FtsZ_C"/>
</dbReference>
<dbReference type="InterPro" id="IPR000217">
    <property type="entry name" value="Tubulin"/>
</dbReference>
<dbReference type="InterPro" id="IPR037103">
    <property type="entry name" value="Tubulin/FtsZ-like_C"/>
</dbReference>
<dbReference type="InterPro" id="IPR018316">
    <property type="entry name" value="Tubulin/FtsZ_2-layer-sand-dom"/>
</dbReference>
<dbReference type="InterPro" id="IPR023123">
    <property type="entry name" value="Tubulin_C"/>
</dbReference>
<dbReference type="PANTHER" id="PTHR11588">
    <property type="entry name" value="TUBULIN"/>
    <property type="match status" value="1"/>
</dbReference>
<dbReference type="Pfam" id="PF03953">
    <property type="entry name" value="Tubulin_C"/>
    <property type="match status" value="1"/>
</dbReference>
<dbReference type="PRINTS" id="PR01162">
    <property type="entry name" value="ALPHATUBULIN"/>
</dbReference>
<dbReference type="SMART" id="SM00865">
    <property type="entry name" value="Tubulin_C"/>
    <property type="match status" value="1"/>
</dbReference>
<dbReference type="SUPFAM" id="SSF55307">
    <property type="entry name" value="Tubulin C-terminal domain-like"/>
    <property type="match status" value="1"/>
</dbReference>